<dbReference type="EMBL" id="AE006914">
    <property type="protein sequence ID" value="AAL02939.1"/>
    <property type="molecule type" value="Genomic_DNA"/>
</dbReference>
<dbReference type="PIR" id="A97750">
    <property type="entry name" value="A97750"/>
</dbReference>
<dbReference type="SMR" id="Q92IL9"/>
<dbReference type="KEGG" id="rco:RC0401"/>
<dbReference type="HOGENOM" id="CLU_002472_3_1_5"/>
<dbReference type="Proteomes" id="UP000000816">
    <property type="component" value="Chromosome"/>
</dbReference>
<dbReference type="GO" id="GO:0005524">
    <property type="term" value="F:ATP binding"/>
    <property type="evidence" value="ECO:0007669"/>
    <property type="project" value="UniProtKB-UniRule"/>
</dbReference>
<dbReference type="GO" id="GO:0140664">
    <property type="term" value="F:ATP-dependent DNA damage sensor activity"/>
    <property type="evidence" value="ECO:0007669"/>
    <property type="project" value="InterPro"/>
</dbReference>
<dbReference type="GO" id="GO:0003684">
    <property type="term" value="F:damaged DNA binding"/>
    <property type="evidence" value="ECO:0007669"/>
    <property type="project" value="UniProtKB-UniRule"/>
</dbReference>
<dbReference type="GO" id="GO:0030983">
    <property type="term" value="F:mismatched DNA binding"/>
    <property type="evidence" value="ECO:0007669"/>
    <property type="project" value="InterPro"/>
</dbReference>
<dbReference type="GO" id="GO:0006298">
    <property type="term" value="P:mismatch repair"/>
    <property type="evidence" value="ECO:0007669"/>
    <property type="project" value="UniProtKB-UniRule"/>
</dbReference>
<dbReference type="CDD" id="cd03284">
    <property type="entry name" value="ABC_MutS1"/>
    <property type="match status" value="1"/>
</dbReference>
<dbReference type="FunFam" id="3.40.50.300:FF:001238">
    <property type="entry name" value="DNA mismatch repair protein"/>
    <property type="match status" value="1"/>
</dbReference>
<dbReference type="FunFam" id="3.40.1170.10:FF:000001">
    <property type="entry name" value="DNA mismatch repair protein MutS"/>
    <property type="match status" value="1"/>
</dbReference>
<dbReference type="Gene3D" id="1.10.1420.10">
    <property type="match status" value="2"/>
</dbReference>
<dbReference type="Gene3D" id="6.10.140.430">
    <property type="match status" value="1"/>
</dbReference>
<dbReference type="Gene3D" id="3.40.1170.10">
    <property type="entry name" value="DNA repair protein MutS, domain I"/>
    <property type="match status" value="1"/>
</dbReference>
<dbReference type="Gene3D" id="3.30.420.110">
    <property type="entry name" value="MutS, connector domain"/>
    <property type="match status" value="1"/>
</dbReference>
<dbReference type="Gene3D" id="3.40.50.300">
    <property type="entry name" value="P-loop containing nucleotide triphosphate hydrolases"/>
    <property type="match status" value="1"/>
</dbReference>
<dbReference type="HAMAP" id="MF_00096">
    <property type="entry name" value="MutS"/>
    <property type="match status" value="1"/>
</dbReference>
<dbReference type="InterPro" id="IPR005748">
    <property type="entry name" value="DNA_mismatch_repair_MutS"/>
</dbReference>
<dbReference type="InterPro" id="IPR007695">
    <property type="entry name" value="DNA_mismatch_repair_MutS-lik_N"/>
</dbReference>
<dbReference type="InterPro" id="IPR017261">
    <property type="entry name" value="DNA_mismatch_repair_MutS/MSH"/>
</dbReference>
<dbReference type="InterPro" id="IPR000432">
    <property type="entry name" value="DNA_mismatch_repair_MutS_C"/>
</dbReference>
<dbReference type="InterPro" id="IPR007861">
    <property type="entry name" value="DNA_mismatch_repair_MutS_clamp"/>
</dbReference>
<dbReference type="InterPro" id="IPR007696">
    <property type="entry name" value="DNA_mismatch_repair_MutS_core"/>
</dbReference>
<dbReference type="InterPro" id="IPR016151">
    <property type="entry name" value="DNA_mismatch_repair_MutS_N"/>
</dbReference>
<dbReference type="InterPro" id="IPR036187">
    <property type="entry name" value="DNA_mismatch_repair_MutS_sf"/>
</dbReference>
<dbReference type="InterPro" id="IPR007860">
    <property type="entry name" value="DNA_mmatch_repair_MutS_con_dom"/>
</dbReference>
<dbReference type="InterPro" id="IPR045076">
    <property type="entry name" value="MutS"/>
</dbReference>
<dbReference type="InterPro" id="IPR036678">
    <property type="entry name" value="MutS_con_dom_sf"/>
</dbReference>
<dbReference type="InterPro" id="IPR027417">
    <property type="entry name" value="P-loop_NTPase"/>
</dbReference>
<dbReference type="NCBIfam" id="TIGR01070">
    <property type="entry name" value="mutS1"/>
    <property type="match status" value="1"/>
</dbReference>
<dbReference type="NCBIfam" id="NF003810">
    <property type="entry name" value="PRK05399.1"/>
    <property type="match status" value="1"/>
</dbReference>
<dbReference type="PANTHER" id="PTHR11361:SF34">
    <property type="entry name" value="DNA MISMATCH REPAIR PROTEIN MSH1, MITOCHONDRIAL"/>
    <property type="match status" value="1"/>
</dbReference>
<dbReference type="PANTHER" id="PTHR11361">
    <property type="entry name" value="DNA MISMATCH REPAIR PROTEIN MUTS FAMILY MEMBER"/>
    <property type="match status" value="1"/>
</dbReference>
<dbReference type="Pfam" id="PF01624">
    <property type="entry name" value="MutS_I"/>
    <property type="match status" value="1"/>
</dbReference>
<dbReference type="Pfam" id="PF05188">
    <property type="entry name" value="MutS_II"/>
    <property type="match status" value="1"/>
</dbReference>
<dbReference type="Pfam" id="PF05192">
    <property type="entry name" value="MutS_III"/>
    <property type="match status" value="1"/>
</dbReference>
<dbReference type="Pfam" id="PF05190">
    <property type="entry name" value="MutS_IV"/>
    <property type="match status" value="1"/>
</dbReference>
<dbReference type="Pfam" id="PF00488">
    <property type="entry name" value="MutS_V"/>
    <property type="match status" value="1"/>
</dbReference>
<dbReference type="PIRSF" id="PIRSF037677">
    <property type="entry name" value="DNA_mis_repair_Msh6"/>
    <property type="match status" value="1"/>
</dbReference>
<dbReference type="SMART" id="SM00534">
    <property type="entry name" value="MUTSac"/>
    <property type="match status" value="1"/>
</dbReference>
<dbReference type="SMART" id="SM00533">
    <property type="entry name" value="MUTSd"/>
    <property type="match status" value="1"/>
</dbReference>
<dbReference type="SUPFAM" id="SSF55271">
    <property type="entry name" value="DNA repair protein MutS, domain I"/>
    <property type="match status" value="1"/>
</dbReference>
<dbReference type="SUPFAM" id="SSF53150">
    <property type="entry name" value="DNA repair protein MutS, domain II"/>
    <property type="match status" value="1"/>
</dbReference>
<dbReference type="SUPFAM" id="SSF48334">
    <property type="entry name" value="DNA repair protein MutS, domain III"/>
    <property type="match status" value="1"/>
</dbReference>
<dbReference type="SUPFAM" id="SSF52540">
    <property type="entry name" value="P-loop containing nucleoside triphosphate hydrolases"/>
    <property type="match status" value="1"/>
</dbReference>
<dbReference type="PROSITE" id="PS00486">
    <property type="entry name" value="DNA_MISMATCH_REPAIR_2"/>
    <property type="match status" value="1"/>
</dbReference>
<reference key="1">
    <citation type="journal article" date="2001" name="Science">
        <title>Mechanisms of evolution in Rickettsia conorii and R. prowazekii.</title>
        <authorList>
            <person name="Ogata H."/>
            <person name="Audic S."/>
            <person name="Renesto-Audiffren P."/>
            <person name="Fournier P.-E."/>
            <person name="Barbe V."/>
            <person name="Samson D."/>
            <person name="Roux V."/>
            <person name="Cossart P."/>
            <person name="Weissenbach J."/>
            <person name="Claverie J.-M."/>
            <person name="Raoult D."/>
        </authorList>
    </citation>
    <scope>NUCLEOTIDE SEQUENCE [LARGE SCALE GENOMIC DNA]</scope>
    <source>
        <strain>ATCC VR-613 / Malish 7</strain>
    </source>
</reference>
<comment type="function">
    <text evidence="1">This protein is involved in the repair of mismatches in DNA. It is possible that it carries out the mismatch recognition step. This protein has a weak ATPase activity.</text>
</comment>
<comment type="similarity">
    <text evidence="1">Belongs to the DNA mismatch repair MutS family.</text>
</comment>
<accession>Q92IL9</accession>
<keyword id="KW-0067">ATP-binding</keyword>
<keyword id="KW-0227">DNA damage</keyword>
<keyword id="KW-0234">DNA repair</keyword>
<keyword id="KW-0238">DNA-binding</keyword>
<keyword id="KW-0547">Nucleotide-binding</keyword>
<sequence>MLLNMNLQELKQKYNYDVATKMMQQYLDIKFAHLDCLLLFRMGDFYEMFYEDAILASNVLGIALTKRGKNGEEEIAMCGVPYHALENYLTKLIEANYKVAICDQLETPEEAKNRGGYKAVVTRDVTRIITPGTIIEENLIASAEPNYLASLVIPKNKETASLCYVDLSTSEIVVVNVPETEILNELARLKPREILLSENLRSSNLADSIFKQLNFRITYQVDSFFAINKCEKIILDFYKMKDIKGIGEISSSQICAIGSVLEYLSLTQKQNIPHLPIPRIIKFHSYMTIDFSTRRNLEIVTNSQGGSQGSLLSTLNHTVTKQGGRLLYNFLSSPLTNIAKINHRLNITEFFYSNLEIVKKIRELLKKTSDIERCLTRITMNRSSGRDLLSIKYTLETATIIKGVFFDAYGFNLPDFIEKIIKPLSGDAELYNLIDETIREDAPNNLNDGGIIKHEYHPKVAQLHDLINNGKLYIEKLKDQYRKETGIDSLKISHNNVIGLFIDITAKNVNKILDPKFIHRQTTVNHVRYTTAELQKLESELVNAKTLVISLEKELYADICSQVIEKASYLRMLASSLSGLDVFCNFAYIADEYDYVKPEFTDDLSFDIVKGRHPVVEKALQRESKSFVYNDCHLSELERIWLITGPNMAGKSTFLRQNAIIAIIAQIGSFVPAKSAKIGVVDKIFSRIGAADDLIKGQSTFMAEMLETSAILAQSTKNSLIILDEVGRGTSTYDGVSIAWSVLEYIHDKLKCRCLFATHYHELTVMSNFLPALQNYTIAIEESGKDILFLHNIISGAADRSYGLHVAALAGLPASVINRAEQILLKFEKTSTGKGKNILSTESNNLSLFYLEPNKTTISSKLDKKFSTIDPDKLSPKEALELIYELKKLV</sequence>
<feature type="chain" id="PRO_0000115129" description="DNA mismatch repair protein MutS">
    <location>
        <begin position="1"/>
        <end position="890"/>
    </location>
</feature>
<feature type="binding site" evidence="1">
    <location>
        <begin position="645"/>
        <end position="652"/>
    </location>
    <ligand>
        <name>ATP</name>
        <dbReference type="ChEBI" id="CHEBI:30616"/>
    </ligand>
</feature>
<protein>
    <recommendedName>
        <fullName evidence="1">DNA mismatch repair protein MutS</fullName>
    </recommendedName>
</protein>
<gene>
    <name evidence="1" type="primary">mutS</name>
    <name type="ordered locus">RC0401</name>
</gene>
<name>MUTS_RICCN</name>
<organism>
    <name type="scientific">Rickettsia conorii (strain ATCC VR-613 / Malish 7)</name>
    <dbReference type="NCBI Taxonomy" id="272944"/>
    <lineage>
        <taxon>Bacteria</taxon>
        <taxon>Pseudomonadati</taxon>
        <taxon>Pseudomonadota</taxon>
        <taxon>Alphaproteobacteria</taxon>
        <taxon>Rickettsiales</taxon>
        <taxon>Rickettsiaceae</taxon>
        <taxon>Rickettsieae</taxon>
        <taxon>Rickettsia</taxon>
        <taxon>spotted fever group</taxon>
    </lineage>
</organism>
<proteinExistence type="inferred from homology"/>
<evidence type="ECO:0000255" key="1">
    <source>
        <dbReference type="HAMAP-Rule" id="MF_00096"/>
    </source>
</evidence>